<organism>
    <name type="scientific">Rickettsia australis</name>
    <dbReference type="NCBI Taxonomy" id="787"/>
    <lineage>
        <taxon>Bacteria</taxon>
        <taxon>Pseudomonadati</taxon>
        <taxon>Pseudomonadota</taxon>
        <taxon>Alphaproteobacteria</taxon>
        <taxon>Rickettsiales</taxon>
        <taxon>Rickettsiaceae</taxon>
        <taxon>Rickettsieae</taxon>
        <taxon>Rickettsia</taxon>
        <taxon>spotted fever group</taxon>
    </lineage>
</organism>
<keyword id="KW-0963">Cytoplasm</keyword>
<dbReference type="EMBL" id="AF187982">
    <property type="protein sequence ID" value="AAK31302.1"/>
    <property type="molecule type" value="Genomic_DNA"/>
</dbReference>
<dbReference type="SMR" id="Q9AJ64"/>
<dbReference type="GO" id="GO:0005737">
    <property type="term" value="C:cytoplasm"/>
    <property type="evidence" value="ECO:0007669"/>
    <property type="project" value="UniProtKB-SubCell"/>
</dbReference>
<dbReference type="InterPro" id="IPR020954">
    <property type="entry name" value="Rickettsia_antigen_120kDa"/>
</dbReference>
<dbReference type="NCBIfam" id="NF038365">
    <property type="entry name" value="Sca4_fam"/>
    <property type="match status" value="1"/>
</dbReference>
<dbReference type="Pfam" id="PF12574">
    <property type="entry name" value="120_Rick_ant"/>
    <property type="match status" value="1"/>
</dbReference>
<proteinExistence type="predicted"/>
<gene>
    <name type="primary">sca4</name>
    <name type="synonym">D</name>
</gene>
<sequence>YENDEEYESGIDEKKQEKAALAQPTLDTADDGFSFTPASSTQSTPSISTLSDTISHDGQTSDPITKAVRETIIQPQKDEIAEQILKDLAALVDRDLAEQKRKEIEEEKEKNKTLSAFFGNPANRELIDKALEKPELKKKLEAIEIAGLKNVFLTYIAANGYSGGFKPVQWENQISASDLRATVVKNDAGDELCTLNETTVKTKPFTVAKQDGTQVQINSYREIDFPIKLDKADGSMHLSMVALKADGTKPSKDKAVYFTAHYEEGPNGKPQLKEISSPKPLKFAGDGPDAVAYIEHGGEIYTLAVTRGKYKEMMKEVELHQGQSVDLSQTIAKDLTKVQGRSQETLQPIITPNQELKSSIETPTTTQVPPITPDSQPLQTETAQMPQSQQVNPNLLNAATALSGSMQDLLNYVNAGLTKEKDGNTQIDLINAAATAILNNEKEKQANIIVLTENTVNNNALTPDTKVAGVNAVLENIKNNQNTPDLEKSKMLEATVAIALNSENLAPKQKQQMLEKAVDVGLNLKDDTSRAVAIDGITDTVIKSNLSTKDKGTMLIAVGDKVNASELSNAEKQQLLGSVLKKGVETQVLSPEQQQLMQQHLDKITAEQTKNAKITEVQGILANPAFNTIAKTEAIQNVTTKVLDSPIKAEIKGETLESITKVVAESPLNGQDKVDIVKGMGEAIASHKTMSPTEKISAIESVETGVAESITALEDKKLMTKGLVDGIYEDKANPEMTKAVSRGVDKSTARPEDKQALKDAASEVALDRETQNFTKGLKEQNLEKPKPRDDIYNKAQDVAEALKNVITPVLDAHPEKREVSEEEVMKKTSSILNDISNLTIEKVNNFRAMLSPDSNLKTLEEKKAEATKKVDELVKEFGTKSSTEEQQSFIKANLTDDKTLSKEVRLQTIDKLLQEQAQKRAKAIENPNVKTEDVRVVSEQSELKPISNDEPGIEKTKMVVGRDRVNIKDNIKIIGALMNARDSIIQSENLP</sequence>
<comment type="subcellular location">
    <subcellularLocation>
        <location evidence="2">Cytoplasm</location>
    </subcellularLocation>
</comment>
<accession>Q9AJ64</accession>
<reference key="1">
    <citation type="journal article" date="2001" name="Int. J. Syst. Evol. Microbiol.">
        <title>Phylogeny of Rickettsia spp. inferred by comparing sequences of 'gene D', which encodes an intracytoplasmic protein.</title>
        <authorList>
            <person name="Sekeyova Z."/>
            <person name="Roux V."/>
            <person name="Raoult D."/>
        </authorList>
    </citation>
    <scope>NUCLEOTIDE SEQUENCE [GENOMIC DNA]</scope>
</reference>
<feature type="chain" id="PRO_0000097609" description="Antigenic heat-stable 120 kDa protein">
    <location>
        <begin position="1" status="less than"/>
        <end position="991" status="greater than"/>
    </location>
</feature>
<feature type="region of interest" description="Disordered" evidence="1">
    <location>
        <begin position="1"/>
        <end position="63"/>
    </location>
</feature>
<feature type="region of interest" description="Disordered" evidence="1">
    <location>
        <begin position="738"/>
        <end position="789"/>
    </location>
</feature>
<feature type="compositionally biased region" description="Acidic residues" evidence="1">
    <location>
        <begin position="1"/>
        <end position="10"/>
    </location>
</feature>
<feature type="compositionally biased region" description="Polar residues" evidence="1">
    <location>
        <begin position="36"/>
        <end position="63"/>
    </location>
</feature>
<feature type="compositionally biased region" description="Basic and acidic residues" evidence="1">
    <location>
        <begin position="743"/>
        <end position="789"/>
    </location>
</feature>
<feature type="non-terminal residue">
    <location>
        <position position="1"/>
    </location>
</feature>
<feature type="non-terminal residue">
    <location>
        <position position="991"/>
    </location>
</feature>
<protein>
    <recommendedName>
        <fullName>Antigenic heat-stable 120 kDa protein</fullName>
    </recommendedName>
    <alternativeName>
        <fullName>120 kDa antigen</fullName>
    </alternativeName>
    <alternativeName>
        <fullName>Protein PS 120</fullName>
        <shortName>PS120</shortName>
    </alternativeName>
</protein>
<evidence type="ECO:0000256" key="1">
    <source>
        <dbReference type="SAM" id="MobiDB-lite"/>
    </source>
</evidence>
<evidence type="ECO:0000305" key="2"/>
<name>SCA4_RICAU</name>